<protein>
    <recommendedName>
        <fullName evidence="1">NADH-quinone oxidoreductase subunit H</fullName>
        <ecNumber evidence="1">7.1.1.-</ecNumber>
    </recommendedName>
    <alternativeName>
        <fullName evidence="1">NADH dehydrogenase I subunit H</fullName>
    </alternativeName>
    <alternativeName>
        <fullName evidence="1">NDH-1 subunit H</fullName>
    </alternativeName>
</protein>
<keyword id="KW-1003">Cell membrane</keyword>
<keyword id="KW-0472">Membrane</keyword>
<keyword id="KW-0520">NAD</keyword>
<keyword id="KW-0874">Quinone</keyword>
<keyword id="KW-1278">Translocase</keyword>
<keyword id="KW-0812">Transmembrane</keyword>
<keyword id="KW-1133">Transmembrane helix</keyword>
<keyword id="KW-0830">Ubiquinone</keyword>
<comment type="function">
    <text evidence="1">NDH-1 shuttles electrons from NADH, via FMN and iron-sulfur (Fe-S) centers, to quinones in the respiratory chain. The immediate electron acceptor for the enzyme in this species is believed to be ubiquinone. Couples the redox reaction to proton translocation (for every two electrons transferred, four hydrogen ions are translocated across the cytoplasmic membrane), and thus conserves the redox energy in a proton gradient. This subunit may bind ubiquinone.</text>
</comment>
<comment type="catalytic activity">
    <reaction evidence="1">
        <text>a quinone + NADH + 5 H(+)(in) = a quinol + NAD(+) + 4 H(+)(out)</text>
        <dbReference type="Rhea" id="RHEA:57888"/>
        <dbReference type="ChEBI" id="CHEBI:15378"/>
        <dbReference type="ChEBI" id="CHEBI:24646"/>
        <dbReference type="ChEBI" id="CHEBI:57540"/>
        <dbReference type="ChEBI" id="CHEBI:57945"/>
        <dbReference type="ChEBI" id="CHEBI:132124"/>
    </reaction>
</comment>
<comment type="subunit">
    <text evidence="1">NDH-1 is composed of 14 different subunits. Subunits NuoA, H, J, K, L, M, N constitute the membrane sector of the complex.</text>
</comment>
<comment type="subcellular location">
    <subcellularLocation>
        <location evidence="1">Cell membrane</location>
        <topology evidence="1">Multi-pass membrane protein</topology>
    </subcellularLocation>
</comment>
<comment type="similarity">
    <text evidence="1">Belongs to the complex I subunit 1 family.</text>
</comment>
<feature type="chain" id="PRO_1000143574" description="NADH-quinone oxidoreductase subunit H">
    <location>
        <begin position="1"/>
        <end position="333"/>
    </location>
</feature>
<feature type="transmembrane region" description="Helical" evidence="1">
    <location>
        <begin position="15"/>
        <end position="35"/>
    </location>
</feature>
<feature type="transmembrane region" description="Helical" evidence="1">
    <location>
        <begin position="88"/>
        <end position="108"/>
    </location>
</feature>
<feature type="transmembrane region" description="Helical" evidence="1">
    <location>
        <begin position="117"/>
        <end position="137"/>
    </location>
</feature>
<feature type="transmembrane region" description="Helical" evidence="1">
    <location>
        <begin position="159"/>
        <end position="179"/>
    </location>
</feature>
<feature type="transmembrane region" description="Helical" evidence="1">
    <location>
        <begin position="191"/>
        <end position="211"/>
    </location>
</feature>
<feature type="transmembrane region" description="Helical" evidence="1">
    <location>
        <begin position="239"/>
        <end position="259"/>
    </location>
</feature>
<feature type="transmembrane region" description="Helical" evidence="1">
    <location>
        <begin position="274"/>
        <end position="296"/>
    </location>
</feature>
<feature type="transmembrane region" description="Helical" evidence="1">
    <location>
        <begin position="313"/>
        <end position="333"/>
    </location>
</feature>
<accession>B7HFJ2</accession>
<dbReference type="EC" id="7.1.1.-" evidence="1"/>
<dbReference type="EMBL" id="CP001176">
    <property type="protein sequence ID" value="ACK62151.1"/>
    <property type="molecule type" value="Genomic_DNA"/>
</dbReference>
<dbReference type="RefSeq" id="WP_000573426.1">
    <property type="nucleotide sequence ID" value="NZ_VEHB01000004.1"/>
</dbReference>
<dbReference type="SMR" id="B7HFJ2"/>
<dbReference type="GeneID" id="67469497"/>
<dbReference type="KEGG" id="bcb:BCB4264_A5417"/>
<dbReference type="HOGENOM" id="CLU_015134_0_1_9"/>
<dbReference type="Proteomes" id="UP000007096">
    <property type="component" value="Chromosome"/>
</dbReference>
<dbReference type="GO" id="GO:0005886">
    <property type="term" value="C:plasma membrane"/>
    <property type="evidence" value="ECO:0007669"/>
    <property type="project" value="UniProtKB-SubCell"/>
</dbReference>
<dbReference type="GO" id="GO:0003954">
    <property type="term" value="F:NADH dehydrogenase activity"/>
    <property type="evidence" value="ECO:0007669"/>
    <property type="project" value="TreeGrafter"/>
</dbReference>
<dbReference type="GO" id="GO:0016655">
    <property type="term" value="F:oxidoreductase activity, acting on NAD(P)H, quinone or similar compound as acceptor"/>
    <property type="evidence" value="ECO:0007669"/>
    <property type="project" value="UniProtKB-UniRule"/>
</dbReference>
<dbReference type="GO" id="GO:0048038">
    <property type="term" value="F:quinone binding"/>
    <property type="evidence" value="ECO:0007669"/>
    <property type="project" value="UniProtKB-KW"/>
</dbReference>
<dbReference type="GO" id="GO:0009060">
    <property type="term" value="P:aerobic respiration"/>
    <property type="evidence" value="ECO:0007669"/>
    <property type="project" value="TreeGrafter"/>
</dbReference>
<dbReference type="HAMAP" id="MF_01350">
    <property type="entry name" value="NDH1_NuoH"/>
    <property type="match status" value="1"/>
</dbReference>
<dbReference type="InterPro" id="IPR001694">
    <property type="entry name" value="NADH_UbQ_OxRdtase_su1/FPO"/>
</dbReference>
<dbReference type="InterPro" id="IPR018086">
    <property type="entry name" value="NADH_UbQ_OxRdtase_su1_CS"/>
</dbReference>
<dbReference type="NCBIfam" id="NF004741">
    <property type="entry name" value="PRK06076.1-2"/>
    <property type="match status" value="1"/>
</dbReference>
<dbReference type="PANTHER" id="PTHR11432">
    <property type="entry name" value="NADH DEHYDROGENASE SUBUNIT 1"/>
    <property type="match status" value="1"/>
</dbReference>
<dbReference type="PANTHER" id="PTHR11432:SF3">
    <property type="entry name" value="NADH-UBIQUINONE OXIDOREDUCTASE CHAIN 1"/>
    <property type="match status" value="1"/>
</dbReference>
<dbReference type="Pfam" id="PF00146">
    <property type="entry name" value="NADHdh"/>
    <property type="match status" value="1"/>
</dbReference>
<dbReference type="PROSITE" id="PS00668">
    <property type="entry name" value="COMPLEX1_ND1_2"/>
    <property type="match status" value="1"/>
</dbReference>
<gene>
    <name evidence="1" type="primary">nuoH</name>
    <name type="ordered locus">BCB4264_A5417</name>
</gene>
<organism>
    <name type="scientific">Bacillus cereus (strain B4264)</name>
    <dbReference type="NCBI Taxonomy" id="405532"/>
    <lineage>
        <taxon>Bacteria</taxon>
        <taxon>Bacillati</taxon>
        <taxon>Bacillota</taxon>
        <taxon>Bacilli</taxon>
        <taxon>Bacillales</taxon>
        <taxon>Bacillaceae</taxon>
        <taxon>Bacillus</taxon>
        <taxon>Bacillus cereus group</taxon>
    </lineage>
</organism>
<reference key="1">
    <citation type="submission" date="2008-10" db="EMBL/GenBank/DDBJ databases">
        <title>Genome sequence of Bacillus cereus B4264.</title>
        <authorList>
            <person name="Dodson R.J."/>
            <person name="Durkin A.S."/>
            <person name="Rosovitz M.J."/>
            <person name="Rasko D.A."/>
            <person name="Hoffmaster A."/>
            <person name="Ravel J."/>
            <person name="Sutton G."/>
        </authorList>
    </citation>
    <scope>NUCLEOTIDE SEQUENCE [LARGE SCALE GENOMIC DNA]</scope>
    <source>
        <strain>B4264</strain>
    </source>
</reference>
<evidence type="ECO:0000255" key="1">
    <source>
        <dbReference type="HAMAP-Rule" id="MF_01350"/>
    </source>
</evidence>
<name>NUOH_BACC4</name>
<proteinExistence type="inferred from homology"/>
<sequence length="333" mass="36909">MIETLLQSPSSWTNFFIFFGLAVLLLFAVLGFVTYGILAERKVMGFMQGRIGPNQVGGRFGLLQTVADVLKLLLKEDSIPKAADKPLFILAPVIAFAPAFMVLAVIPFTDKFQFADIGVGLLYYIAVSGITTIGVVTGGWASNNKYSLLGGMRAAAQMISYEIPLVMSVIGIVLLAGSLNLNEIVAAQEKVWYIFVQPIGFVVFLIAAVAELNRTPFDLPEAESELVSGYHTEYSGFRWAFFMLSEYVYFFGMASLITVLFLGGWNPVMFLGFIPGAVWFALKFSSVVFLLIWFRVTFPRIRGDQLMEFGWKVLLPIALANIFLTALIKELFF</sequence>